<gene>
    <name type="ordered locus">BMASAVP1_A2845</name>
</gene>
<protein>
    <recommendedName>
        <fullName evidence="1">Putative membrane protein insertion efficiency factor</fullName>
    </recommendedName>
</protein>
<reference key="1">
    <citation type="journal article" date="2010" name="Genome Biol. Evol.">
        <title>Continuing evolution of Burkholderia mallei through genome reduction and large-scale rearrangements.</title>
        <authorList>
            <person name="Losada L."/>
            <person name="Ronning C.M."/>
            <person name="DeShazer D."/>
            <person name="Woods D."/>
            <person name="Fedorova N."/>
            <person name="Kim H.S."/>
            <person name="Shabalina S.A."/>
            <person name="Pearson T.R."/>
            <person name="Brinkac L."/>
            <person name="Tan P."/>
            <person name="Nandi T."/>
            <person name="Crabtree J."/>
            <person name="Badger J."/>
            <person name="Beckstrom-Sternberg S."/>
            <person name="Saqib M."/>
            <person name="Schutzer S.E."/>
            <person name="Keim P."/>
            <person name="Nierman W.C."/>
        </authorList>
    </citation>
    <scope>NUCLEOTIDE SEQUENCE [LARGE SCALE GENOMIC DNA]</scope>
    <source>
        <strain>SAVP1</strain>
    </source>
</reference>
<feature type="chain" id="PRO_1000013072" description="Putative membrane protein insertion efficiency factor">
    <location>
        <begin position="1"/>
        <end position="89"/>
    </location>
</feature>
<feature type="region of interest" description="Disordered" evidence="2">
    <location>
        <begin position="68"/>
        <end position="89"/>
    </location>
</feature>
<feature type="compositionally biased region" description="Basic and acidic residues" evidence="2">
    <location>
        <begin position="77"/>
        <end position="89"/>
    </location>
</feature>
<comment type="function">
    <text evidence="1">Could be involved in insertion of integral membrane proteins into the membrane.</text>
</comment>
<comment type="subcellular location">
    <subcellularLocation>
        <location evidence="1">Cell inner membrane</location>
        <topology evidence="1">Peripheral membrane protein</topology>
        <orientation evidence="1">Cytoplasmic side</orientation>
    </subcellularLocation>
</comment>
<comment type="similarity">
    <text evidence="1">Belongs to the UPF0161 family.</text>
</comment>
<proteinExistence type="inferred from homology"/>
<sequence length="89" mass="9817">MQTVLIALLRFYKLAVSPLLGSRCRFYPSCSDYAREAIQYHGAARGTYLAARRLCRCHPFSAGGVDLVPPPNSDARNAPHEAEASSHRL</sequence>
<evidence type="ECO:0000255" key="1">
    <source>
        <dbReference type="HAMAP-Rule" id="MF_00386"/>
    </source>
</evidence>
<evidence type="ECO:0000256" key="2">
    <source>
        <dbReference type="SAM" id="MobiDB-lite"/>
    </source>
</evidence>
<name>YIDD_BURMS</name>
<accession>A1V7D6</accession>
<organism>
    <name type="scientific">Burkholderia mallei (strain SAVP1)</name>
    <dbReference type="NCBI Taxonomy" id="320388"/>
    <lineage>
        <taxon>Bacteria</taxon>
        <taxon>Pseudomonadati</taxon>
        <taxon>Pseudomonadota</taxon>
        <taxon>Betaproteobacteria</taxon>
        <taxon>Burkholderiales</taxon>
        <taxon>Burkholderiaceae</taxon>
        <taxon>Burkholderia</taxon>
        <taxon>pseudomallei group</taxon>
    </lineage>
</organism>
<dbReference type="EMBL" id="CP000526">
    <property type="protein sequence ID" value="ABM50537.1"/>
    <property type="molecule type" value="Genomic_DNA"/>
</dbReference>
<dbReference type="KEGG" id="bmv:BMASAVP1_A2845"/>
<dbReference type="HOGENOM" id="CLU_144811_2_2_4"/>
<dbReference type="GO" id="GO:0005886">
    <property type="term" value="C:plasma membrane"/>
    <property type="evidence" value="ECO:0007669"/>
    <property type="project" value="UniProtKB-SubCell"/>
</dbReference>
<dbReference type="HAMAP" id="MF_00386">
    <property type="entry name" value="UPF0161_YidD"/>
    <property type="match status" value="1"/>
</dbReference>
<dbReference type="InterPro" id="IPR002696">
    <property type="entry name" value="Membr_insert_effic_factor_YidD"/>
</dbReference>
<dbReference type="NCBIfam" id="TIGR00278">
    <property type="entry name" value="membrane protein insertion efficiency factor YidD"/>
    <property type="match status" value="1"/>
</dbReference>
<dbReference type="PANTHER" id="PTHR33383">
    <property type="entry name" value="MEMBRANE PROTEIN INSERTION EFFICIENCY FACTOR-RELATED"/>
    <property type="match status" value="1"/>
</dbReference>
<dbReference type="PANTHER" id="PTHR33383:SF1">
    <property type="entry name" value="MEMBRANE PROTEIN INSERTION EFFICIENCY FACTOR-RELATED"/>
    <property type="match status" value="1"/>
</dbReference>
<dbReference type="Pfam" id="PF01809">
    <property type="entry name" value="YidD"/>
    <property type="match status" value="1"/>
</dbReference>
<dbReference type="SMART" id="SM01234">
    <property type="entry name" value="Haemolytic"/>
    <property type="match status" value="1"/>
</dbReference>
<keyword id="KW-0997">Cell inner membrane</keyword>
<keyword id="KW-1003">Cell membrane</keyword>
<keyword id="KW-0472">Membrane</keyword>